<dbReference type="EMBL" id="CP001164">
    <property type="protein sequence ID" value="ACI35810.1"/>
    <property type="molecule type" value="Genomic_DNA"/>
</dbReference>
<dbReference type="RefSeq" id="WP_001301619.1">
    <property type="nucleotide sequence ID" value="NC_011353.1"/>
</dbReference>
<dbReference type="SMR" id="B5Z3R6"/>
<dbReference type="KEGG" id="ecf:ECH74115_5835"/>
<dbReference type="HOGENOM" id="CLU_1977621_0_0_6"/>
<dbReference type="GO" id="GO:0005737">
    <property type="term" value="C:cytoplasm"/>
    <property type="evidence" value="ECO:0007669"/>
    <property type="project" value="UniProtKB-SubCell"/>
</dbReference>
<dbReference type="GO" id="GO:0043856">
    <property type="term" value="F:anti-sigma factor antagonist activity"/>
    <property type="evidence" value="ECO:0007669"/>
    <property type="project" value="InterPro"/>
</dbReference>
<dbReference type="GO" id="GO:0034599">
    <property type="term" value="P:cellular response to oxidative stress"/>
    <property type="evidence" value="ECO:0007669"/>
    <property type="project" value="UniProtKB-UniRule"/>
</dbReference>
<dbReference type="GO" id="GO:0006974">
    <property type="term" value="P:DNA damage response"/>
    <property type="evidence" value="ECO:0007669"/>
    <property type="project" value="InterPro"/>
</dbReference>
<dbReference type="HAMAP" id="MF_02010">
    <property type="entry name" value="IraD"/>
    <property type="match status" value="1"/>
</dbReference>
<dbReference type="InterPro" id="IPR023776">
    <property type="entry name" value="Anti-adapt_IraD"/>
</dbReference>
<dbReference type="InterPro" id="IPR007048">
    <property type="entry name" value="IraD/Gp25-like"/>
</dbReference>
<dbReference type="NCBIfam" id="NF010726">
    <property type="entry name" value="PRK14128.1-1"/>
    <property type="match status" value="1"/>
</dbReference>
<dbReference type="NCBIfam" id="NF010728">
    <property type="entry name" value="PRK14128.1-3"/>
    <property type="match status" value="1"/>
</dbReference>
<dbReference type="Pfam" id="PF04965">
    <property type="entry name" value="GPW_gp25"/>
    <property type="match status" value="1"/>
</dbReference>
<dbReference type="SUPFAM" id="SSF160719">
    <property type="entry name" value="gpW/gp25-like"/>
    <property type="match status" value="1"/>
</dbReference>
<organism>
    <name type="scientific">Escherichia coli O157:H7 (strain EC4115 / EHEC)</name>
    <dbReference type="NCBI Taxonomy" id="444450"/>
    <lineage>
        <taxon>Bacteria</taxon>
        <taxon>Pseudomonadati</taxon>
        <taxon>Pseudomonadota</taxon>
        <taxon>Gammaproteobacteria</taxon>
        <taxon>Enterobacterales</taxon>
        <taxon>Enterobacteriaceae</taxon>
        <taxon>Escherichia</taxon>
    </lineage>
</organism>
<proteinExistence type="inferred from homology"/>
<evidence type="ECO:0000255" key="1">
    <source>
        <dbReference type="HAMAP-Rule" id="MF_02010"/>
    </source>
</evidence>
<sequence length="130" mass="14803">MMRQSLQAVLPEISGNKTSLLRKSVCSDLLTLFNSPHSTLPSLLVSGMPEWQVHNPSDKHLQSWYCRQLRSALLFHEPRIAALQVNLKEAYCHTLAISLEIMLYHDDEPLTFDLVWDNGGWRSATLENVS</sequence>
<reference key="1">
    <citation type="journal article" date="2011" name="Proc. Natl. Acad. Sci. U.S.A.">
        <title>Genomic anatomy of Escherichia coli O157:H7 outbreaks.</title>
        <authorList>
            <person name="Eppinger M."/>
            <person name="Mammel M.K."/>
            <person name="Leclerc J.E."/>
            <person name="Ravel J."/>
            <person name="Cebula T.A."/>
        </authorList>
    </citation>
    <scope>NUCLEOTIDE SEQUENCE [LARGE SCALE GENOMIC DNA]</scope>
    <source>
        <strain>EC4115 / EHEC</strain>
    </source>
</reference>
<accession>B5Z3R6</accession>
<gene>
    <name evidence="1" type="primary">iraD</name>
    <name type="ordered locus">ECH74115_5835</name>
</gene>
<protein>
    <recommendedName>
        <fullName evidence="1">Anti-adapter protein IraD</fullName>
    </recommendedName>
</protein>
<keyword id="KW-0963">Cytoplasm</keyword>
<keyword id="KW-0346">Stress response</keyword>
<feature type="chain" id="PRO_1000189480" description="Anti-adapter protein IraD">
    <location>
        <begin position="1"/>
        <end position="130"/>
    </location>
</feature>
<name>IRAD_ECO5E</name>
<comment type="function">
    <text evidence="1">Inhibits RpoS proteolysis by regulating RssB activity, thereby increasing the stability of the sigma stress factor RpoS during oxidative stress. Its effect on RpoS stability is due to its interaction with RssB, which probably blocks the interaction of RssB with RpoS, and the consequent delivery of the RssB-RpoS complex to the ClpXP protein degradation pathway.</text>
</comment>
<comment type="subunit">
    <text evidence="1">Interacts with RssB.</text>
</comment>
<comment type="subcellular location">
    <subcellularLocation>
        <location evidence="1">Cytoplasm</location>
    </subcellularLocation>
</comment>
<comment type="similarity">
    <text evidence="1">Belongs to the GpW/Gp25 family. IraD subfamily.</text>
</comment>